<feature type="chain" id="PRO_0000061410" description="Cytochrome b">
    <location>
        <begin position="1"/>
        <end position="300"/>
    </location>
</feature>
<feature type="transmembrane region" description="Helical" evidence="2">
    <location>
        <begin position="28"/>
        <end position="48"/>
    </location>
</feature>
<feature type="transmembrane region" description="Helical" evidence="2">
    <location>
        <begin position="72"/>
        <end position="94"/>
    </location>
</feature>
<feature type="transmembrane region" description="Helical" evidence="2">
    <location>
        <begin position="107"/>
        <end position="127"/>
    </location>
</feature>
<feature type="transmembrane region" description="Helical" evidence="2">
    <location>
        <begin position="168"/>
        <end position="187"/>
    </location>
</feature>
<feature type="transmembrane region" description="Helical" evidence="3">
    <location>
        <begin position="223"/>
        <end position="243"/>
    </location>
</feature>
<feature type="transmembrane region" description="Helical" evidence="3">
    <location>
        <begin position="279"/>
        <end position="299"/>
    </location>
</feature>
<feature type="binding site" description="axial binding residue" evidence="5">
    <location>
        <position position="78"/>
    </location>
    <ligand>
        <name>heme b</name>
        <dbReference type="ChEBI" id="CHEBI:60344"/>
        <label>b562</label>
    </ligand>
    <ligandPart>
        <name>Fe</name>
        <dbReference type="ChEBI" id="CHEBI:18248"/>
    </ligandPart>
</feature>
<feature type="binding site" description="axial binding residue" evidence="5">
    <location>
        <position position="92"/>
    </location>
    <ligand>
        <name>heme b</name>
        <dbReference type="ChEBI" id="CHEBI:60344"/>
        <label>b566</label>
    </ligand>
    <ligandPart>
        <name>Fe</name>
        <dbReference type="ChEBI" id="CHEBI:18248"/>
    </ligandPart>
</feature>
<protein>
    <recommendedName>
        <fullName>Cytochrome b</fullName>
    </recommendedName>
    <alternativeName>
        <fullName>Complex III subunit 3</fullName>
    </alternativeName>
    <alternativeName>
        <fullName>Complex III subunit III</fullName>
    </alternativeName>
    <alternativeName>
        <fullName>Cytochrome b-c1 complex subunit 3</fullName>
    </alternativeName>
    <alternativeName>
        <fullName>Ubiquinol-cytochrome-c reductase complex cytochrome b subunit</fullName>
    </alternativeName>
</protein>
<proteinExistence type="inferred from homology"/>
<gene>
    <name type="primary">MT-CYB</name>
    <name type="synonym">COB</name>
    <name type="synonym">CYTB</name>
    <name type="synonym">MTCYB</name>
</gene>
<sequence length="300" mass="35019">MNYYSINLAKAHLLHYPCPLNINFLWNYGFLLGIVFFIQILKGVLLALVILQKLSYAYYSVQHILRAIMDGWCFRYMHATGASFVFILTYLHILRGLNYSYSYLPLSWISGLMIFLISIVTAFYGYVLPWGQMSFWNTTVITNLLYLFRTCFMDCGGYLVSDPTLKRFFVFIYFPFIALCQSLFGILPLSHPDNAITVDRYATPLHIVPEWYFLPFYAMLKTIPNKTAGLLVMLASLQILFLLAEQRNLTTLIHFKFAFGAREYSVPTICYMSSMLIWIGCQLPQILHFIWSFIYYIILF</sequence>
<reference key="1">
    <citation type="journal article" date="1989" name="Mol. Cell. Biol.">
        <title>Sequence identification of cytochrome b in Plasmodium gallinaceum.</title>
        <authorList>
            <person name="Aldritt S.M."/>
            <person name="Joseph J.T."/>
            <person name="Wirth D.F."/>
        </authorList>
    </citation>
    <scope>NUCLEOTIDE SEQUENCE [GENOMIC DNA]</scope>
</reference>
<name>CYB_PLAGA</name>
<geneLocation type="mitochondrion"/>
<comment type="function">
    <text evidence="2">Component of the ubiquinol-cytochrome c reductase complex (complex III or cytochrome b-c1 complex) that is part of the mitochondrial respiratory chain. The b-c1 complex mediates electron transfer from ubiquinol to cytochrome c. Contributes to the generation of a proton gradient across the mitochondrial membrane that is then used for ATP synthesis.</text>
</comment>
<comment type="cofactor">
    <cofactor evidence="2">
        <name>heme b</name>
        <dbReference type="ChEBI" id="CHEBI:60344"/>
    </cofactor>
    <text evidence="2">Binds 2 heme b groups non-covalently.</text>
</comment>
<comment type="subunit">
    <text evidence="1">The main subunits of complex b-c1 are: cytochrome b, cytochrome c1 and the Rieske protein.</text>
</comment>
<comment type="subcellular location">
    <subcellularLocation>
        <location evidence="2">Mitochondrion inner membrane</location>
        <topology evidence="2">Multi-pass membrane protein</topology>
    </subcellularLocation>
</comment>
<comment type="miscellaneous">
    <text evidence="1">Heme 1 (or BL or b562) is low-potential and absorbs at about 562 nm, and heme 2 (or BH or b566) is high-potential and absorbs at about 566 nm.</text>
</comment>
<comment type="similarity">
    <text evidence="4 5">Belongs to the cytochrome b family.</text>
</comment>
<comment type="caution">
    <text evidence="2">The protein contains an even number of transmembrane helices, fewer than predicted by bioinformatics tools.</text>
</comment>
<keyword id="KW-0249">Electron transport</keyword>
<keyword id="KW-0349">Heme</keyword>
<keyword id="KW-0408">Iron</keyword>
<keyword id="KW-0472">Membrane</keyword>
<keyword id="KW-0479">Metal-binding</keyword>
<keyword id="KW-0496">Mitochondrion</keyword>
<keyword id="KW-0999">Mitochondrion inner membrane</keyword>
<keyword id="KW-0679">Respiratory chain</keyword>
<keyword id="KW-0812">Transmembrane</keyword>
<keyword id="KW-1133">Transmembrane helix</keyword>
<keyword id="KW-0813">Transport</keyword>
<evidence type="ECO:0000250" key="1"/>
<evidence type="ECO:0000250" key="2">
    <source>
        <dbReference type="UniProtKB" id="P00163"/>
    </source>
</evidence>
<evidence type="ECO:0000255" key="3"/>
<evidence type="ECO:0000255" key="4">
    <source>
        <dbReference type="PROSITE-ProRule" id="PRU00967"/>
    </source>
</evidence>
<evidence type="ECO:0000255" key="5">
    <source>
        <dbReference type="PROSITE-ProRule" id="PRU00968"/>
    </source>
</evidence>
<dbReference type="PIR" id="A32566">
    <property type="entry name" value="A32566"/>
</dbReference>
<dbReference type="SMR" id="P81376"/>
<dbReference type="VEuPathDB" id="PlasmoDB:PGAL8A_MIT00300"/>
<dbReference type="GO" id="GO:0005743">
    <property type="term" value="C:mitochondrial inner membrane"/>
    <property type="evidence" value="ECO:0007669"/>
    <property type="project" value="UniProtKB-SubCell"/>
</dbReference>
<dbReference type="GO" id="GO:0046872">
    <property type="term" value="F:metal ion binding"/>
    <property type="evidence" value="ECO:0007669"/>
    <property type="project" value="UniProtKB-KW"/>
</dbReference>
<dbReference type="GO" id="GO:0008121">
    <property type="term" value="F:ubiquinol-cytochrome-c reductase activity"/>
    <property type="evidence" value="ECO:0007669"/>
    <property type="project" value="TreeGrafter"/>
</dbReference>
<dbReference type="GO" id="GO:0006122">
    <property type="term" value="P:mitochondrial electron transport, ubiquinol to cytochrome c"/>
    <property type="evidence" value="ECO:0007669"/>
    <property type="project" value="TreeGrafter"/>
</dbReference>
<dbReference type="Gene3D" id="1.20.810.10">
    <property type="entry name" value="Cytochrome Bc1 Complex, Chain C"/>
    <property type="match status" value="1"/>
</dbReference>
<dbReference type="Gene3D" id="1.10.287.980">
    <property type="entry name" value="plastocyanin oxidoreductase"/>
    <property type="match status" value="1"/>
</dbReference>
<dbReference type="InterPro" id="IPR005798">
    <property type="entry name" value="Cyt_b/b6_C"/>
</dbReference>
<dbReference type="InterPro" id="IPR005797">
    <property type="entry name" value="Cyt_b/b6_N"/>
</dbReference>
<dbReference type="InterPro" id="IPR027387">
    <property type="entry name" value="Cytb/b6-like_sf"/>
</dbReference>
<dbReference type="InterPro" id="IPR016174">
    <property type="entry name" value="Di-haem_cyt_TM"/>
</dbReference>
<dbReference type="PANTHER" id="PTHR19271">
    <property type="entry name" value="CYTOCHROME B"/>
    <property type="match status" value="1"/>
</dbReference>
<dbReference type="PANTHER" id="PTHR19271:SF16">
    <property type="entry name" value="CYTOCHROME B"/>
    <property type="match status" value="1"/>
</dbReference>
<dbReference type="Pfam" id="PF00032">
    <property type="entry name" value="Cytochrom_B_C"/>
    <property type="match status" value="1"/>
</dbReference>
<dbReference type="Pfam" id="PF00033">
    <property type="entry name" value="Cytochrome_B"/>
    <property type="match status" value="1"/>
</dbReference>
<dbReference type="SUPFAM" id="SSF81342">
    <property type="entry name" value="Transmembrane di-heme cytochromes"/>
    <property type="match status" value="1"/>
</dbReference>
<dbReference type="PROSITE" id="PS51003">
    <property type="entry name" value="CYTB_CTER"/>
    <property type="match status" value="1"/>
</dbReference>
<dbReference type="PROSITE" id="PS51002">
    <property type="entry name" value="CYTB_NTER"/>
    <property type="match status" value="1"/>
</dbReference>
<accession>P81376</accession>
<organism>
    <name type="scientific">Plasmodium gallinaceum</name>
    <dbReference type="NCBI Taxonomy" id="5849"/>
    <lineage>
        <taxon>Eukaryota</taxon>
        <taxon>Sar</taxon>
        <taxon>Alveolata</taxon>
        <taxon>Apicomplexa</taxon>
        <taxon>Aconoidasida</taxon>
        <taxon>Haemosporida</taxon>
        <taxon>Plasmodiidae</taxon>
        <taxon>Plasmodium</taxon>
        <taxon>Plasmodium (Haemamoeba)</taxon>
    </lineage>
</organism>